<proteinExistence type="inferred from homology"/>
<organism>
    <name type="scientific">Clostridium tetani (strain Massachusetts / E88)</name>
    <dbReference type="NCBI Taxonomy" id="212717"/>
    <lineage>
        <taxon>Bacteria</taxon>
        <taxon>Bacillati</taxon>
        <taxon>Bacillota</taxon>
        <taxon>Clostridia</taxon>
        <taxon>Eubacteriales</taxon>
        <taxon>Clostridiaceae</taxon>
        <taxon>Clostridium</taxon>
    </lineage>
</organism>
<keyword id="KW-1185">Reference proteome</keyword>
<keyword id="KW-0687">Ribonucleoprotein</keyword>
<keyword id="KW-0689">Ribosomal protein</keyword>
<keyword id="KW-0694">RNA-binding</keyword>
<keyword id="KW-0699">rRNA-binding</keyword>
<sequence length="209" mass="22990">MKKAIIGRKLGMTQIFDENNRVVPVTVVEAGPCTVVQKKSVEKDGYEAIQVGYGEIREKLVNKPLKGHFEKAGVGLSRMLREFKLENVSEYQVGQEIKVDIFEAGEKIDVTGTSKGKGYQGIIKRWNAHRGPMSHGSKFHRAVGSMGAASYPARTFKNKRMAGHMGNVKSTVLNLEVVKTIPEKNLILIKGGIPGPNKGYVIIRNSIKA</sequence>
<feature type="chain" id="PRO_0000077092" description="Large ribosomal subunit protein uL3">
    <location>
        <begin position="1"/>
        <end position="209"/>
    </location>
</feature>
<dbReference type="EMBL" id="AE015927">
    <property type="protein sequence ID" value="AAO37056.1"/>
    <property type="molecule type" value="Genomic_DNA"/>
</dbReference>
<dbReference type="RefSeq" id="WP_011100717.1">
    <property type="nucleotide sequence ID" value="NC_004557.1"/>
</dbReference>
<dbReference type="SMR" id="Q890N9"/>
<dbReference type="STRING" id="212717.CTC_02600"/>
<dbReference type="GeneID" id="24253141"/>
<dbReference type="KEGG" id="ctc:CTC_02600"/>
<dbReference type="HOGENOM" id="CLU_044142_4_1_9"/>
<dbReference type="OrthoDB" id="9806135at2"/>
<dbReference type="Proteomes" id="UP000001412">
    <property type="component" value="Chromosome"/>
</dbReference>
<dbReference type="GO" id="GO:0022625">
    <property type="term" value="C:cytosolic large ribosomal subunit"/>
    <property type="evidence" value="ECO:0007669"/>
    <property type="project" value="TreeGrafter"/>
</dbReference>
<dbReference type="GO" id="GO:0019843">
    <property type="term" value="F:rRNA binding"/>
    <property type="evidence" value="ECO:0007669"/>
    <property type="project" value="UniProtKB-UniRule"/>
</dbReference>
<dbReference type="GO" id="GO:0003735">
    <property type="term" value="F:structural constituent of ribosome"/>
    <property type="evidence" value="ECO:0007669"/>
    <property type="project" value="InterPro"/>
</dbReference>
<dbReference type="GO" id="GO:0006412">
    <property type="term" value="P:translation"/>
    <property type="evidence" value="ECO:0007669"/>
    <property type="project" value="UniProtKB-UniRule"/>
</dbReference>
<dbReference type="FunFam" id="2.40.30.10:FF:000004">
    <property type="entry name" value="50S ribosomal protein L3"/>
    <property type="match status" value="1"/>
</dbReference>
<dbReference type="FunFam" id="3.30.160.810:FF:000001">
    <property type="entry name" value="50S ribosomal protein L3"/>
    <property type="match status" value="1"/>
</dbReference>
<dbReference type="Gene3D" id="3.30.160.810">
    <property type="match status" value="1"/>
</dbReference>
<dbReference type="Gene3D" id="2.40.30.10">
    <property type="entry name" value="Translation factors"/>
    <property type="match status" value="1"/>
</dbReference>
<dbReference type="HAMAP" id="MF_01325_B">
    <property type="entry name" value="Ribosomal_uL3_B"/>
    <property type="match status" value="1"/>
</dbReference>
<dbReference type="InterPro" id="IPR000597">
    <property type="entry name" value="Ribosomal_uL3"/>
</dbReference>
<dbReference type="InterPro" id="IPR019927">
    <property type="entry name" value="Ribosomal_uL3_bac/org-type"/>
</dbReference>
<dbReference type="InterPro" id="IPR019926">
    <property type="entry name" value="Ribosomal_uL3_CS"/>
</dbReference>
<dbReference type="InterPro" id="IPR009000">
    <property type="entry name" value="Transl_B-barrel_sf"/>
</dbReference>
<dbReference type="NCBIfam" id="TIGR03625">
    <property type="entry name" value="L3_bact"/>
    <property type="match status" value="1"/>
</dbReference>
<dbReference type="PANTHER" id="PTHR11229">
    <property type="entry name" value="50S RIBOSOMAL PROTEIN L3"/>
    <property type="match status" value="1"/>
</dbReference>
<dbReference type="PANTHER" id="PTHR11229:SF16">
    <property type="entry name" value="LARGE RIBOSOMAL SUBUNIT PROTEIN UL3C"/>
    <property type="match status" value="1"/>
</dbReference>
<dbReference type="Pfam" id="PF00297">
    <property type="entry name" value="Ribosomal_L3"/>
    <property type="match status" value="1"/>
</dbReference>
<dbReference type="SUPFAM" id="SSF50447">
    <property type="entry name" value="Translation proteins"/>
    <property type="match status" value="1"/>
</dbReference>
<dbReference type="PROSITE" id="PS00474">
    <property type="entry name" value="RIBOSOMAL_L3"/>
    <property type="match status" value="1"/>
</dbReference>
<accession>Q890N9</accession>
<gene>
    <name evidence="1" type="primary">rplC</name>
    <name type="ordered locus">CTC_02600</name>
</gene>
<name>RL3_CLOTE</name>
<protein>
    <recommendedName>
        <fullName evidence="1">Large ribosomal subunit protein uL3</fullName>
    </recommendedName>
    <alternativeName>
        <fullName evidence="2">50S ribosomal protein L3</fullName>
    </alternativeName>
</protein>
<reference key="1">
    <citation type="journal article" date="2003" name="Proc. Natl. Acad. Sci. U.S.A.">
        <title>The genome sequence of Clostridium tetani, the causative agent of tetanus disease.</title>
        <authorList>
            <person name="Brueggemann H."/>
            <person name="Baeumer S."/>
            <person name="Fricke W.F."/>
            <person name="Wiezer A."/>
            <person name="Liesegang H."/>
            <person name="Decker I."/>
            <person name="Herzberg C."/>
            <person name="Martinez-Arias R."/>
            <person name="Merkl R."/>
            <person name="Henne A."/>
            <person name="Gottschalk G."/>
        </authorList>
    </citation>
    <scope>NUCLEOTIDE SEQUENCE [LARGE SCALE GENOMIC DNA]</scope>
    <source>
        <strain>Massachusetts / E88</strain>
    </source>
</reference>
<comment type="function">
    <text evidence="1">One of the primary rRNA binding proteins, it binds directly near the 3'-end of the 23S rRNA, where it nucleates assembly of the 50S subunit.</text>
</comment>
<comment type="subunit">
    <text evidence="1">Part of the 50S ribosomal subunit. Forms a cluster with proteins L14 and L19.</text>
</comment>
<comment type="similarity">
    <text evidence="1">Belongs to the universal ribosomal protein uL3 family.</text>
</comment>
<evidence type="ECO:0000255" key="1">
    <source>
        <dbReference type="HAMAP-Rule" id="MF_01325"/>
    </source>
</evidence>
<evidence type="ECO:0000305" key="2"/>